<reference key="1">
    <citation type="journal article" date="2006" name="Proc. Natl. Acad. Sci. U.S.A.">
        <title>Identification of genes subject to positive selection in uropathogenic strains of Escherichia coli: a comparative genomics approach.</title>
        <authorList>
            <person name="Chen S.L."/>
            <person name="Hung C.-S."/>
            <person name="Xu J."/>
            <person name="Reigstad C.S."/>
            <person name="Magrini V."/>
            <person name="Sabo A."/>
            <person name="Blasiar D."/>
            <person name="Bieri T."/>
            <person name="Meyer R.R."/>
            <person name="Ozersky P."/>
            <person name="Armstrong J.R."/>
            <person name="Fulton R.S."/>
            <person name="Latreille J.P."/>
            <person name="Spieth J."/>
            <person name="Hooton T.M."/>
            <person name="Mardis E.R."/>
            <person name="Hultgren S.J."/>
            <person name="Gordon J.I."/>
        </authorList>
    </citation>
    <scope>NUCLEOTIDE SEQUENCE [LARGE SCALE GENOMIC DNA]</scope>
    <source>
        <strain>UTI89 / UPEC</strain>
    </source>
</reference>
<evidence type="ECO:0000255" key="1">
    <source>
        <dbReference type="HAMAP-Rule" id="MF_02016"/>
    </source>
</evidence>
<sequence length="518" mass="58288">MKKLKINYLFIGILALLLAVALWPSIPWFGKADNRIAAIQARGELRVSTIHTPLTYNEINGKPFGLDYELAKQFADYLGVKLKVTVRQNISQLFDDLDNGNADLLAAGLVYNSERVKNYQPGPTYYSVSQQLVYKVGQYRPRTLGNLTAEQLTVAPGHVVVNDLQTLKDTKFPELSWKVDDKKGSAELMEDVIEGKLDYTIADSVAISLFQRVHPELAVALDITDEQPVTWFSPLDGDNTLSAALLDFFNEMNEDGTLARIEEKYLGHGDDFDYVDTRTFLRAVDAVLPQLKPLFEKYAEEIDWRLLAAIAYQESHWDAQATSPTGVRGMMMLTKNTAQSLGITDRTDAEQSISGGVRYLQDMMSKVPESVPENERIWFALAAYNMGYAHMLDARALTAKTKGNPDSWADVKQRLPLLSQKPYYSKLTYGYARGHEAYAYVENIRKYQISLVGYLQEKEKQATEAAMQLAQDYPAVSPTELGKEKFPFLSFLSQSSSNYLTHSPSLLFSRKGSEEKQN</sequence>
<name>MLTF_ECOUT</name>
<feature type="signal peptide" evidence="1">
    <location>
        <begin position="1"/>
        <end position="21"/>
    </location>
</feature>
<feature type="chain" id="PRO_0000353935" description="Membrane-bound lytic murein transglycosylase F">
    <location>
        <begin position="22"/>
        <end position="518"/>
    </location>
</feature>
<feature type="region of interest" description="Non-LT domain" evidence="1">
    <location>
        <begin position="22"/>
        <end position="269"/>
    </location>
</feature>
<feature type="region of interest" description="LT domain" evidence="1">
    <location>
        <begin position="270"/>
        <end position="518"/>
    </location>
</feature>
<feature type="active site" evidence="1">
    <location>
        <position position="314"/>
    </location>
</feature>
<gene>
    <name evidence="1" type="primary">mltF</name>
    <name type="ordered locus">UTI89_C2878</name>
</gene>
<accession>Q1R8H6</accession>
<keyword id="KW-0998">Cell outer membrane</keyword>
<keyword id="KW-0961">Cell wall biogenesis/degradation</keyword>
<keyword id="KW-0456">Lyase</keyword>
<keyword id="KW-0472">Membrane</keyword>
<keyword id="KW-0732">Signal</keyword>
<proteinExistence type="inferred from homology"/>
<organism>
    <name type="scientific">Escherichia coli (strain UTI89 / UPEC)</name>
    <dbReference type="NCBI Taxonomy" id="364106"/>
    <lineage>
        <taxon>Bacteria</taxon>
        <taxon>Pseudomonadati</taxon>
        <taxon>Pseudomonadota</taxon>
        <taxon>Gammaproteobacteria</taxon>
        <taxon>Enterobacterales</taxon>
        <taxon>Enterobacteriaceae</taxon>
        <taxon>Escherichia</taxon>
    </lineage>
</organism>
<protein>
    <recommendedName>
        <fullName evidence="1">Membrane-bound lytic murein transglycosylase F</fullName>
        <ecNumber evidence="1">4.2.2.n1</ecNumber>
    </recommendedName>
    <alternativeName>
        <fullName evidence="1">Murein lyase F</fullName>
    </alternativeName>
</protein>
<dbReference type="EC" id="4.2.2.n1" evidence="1"/>
<dbReference type="EMBL" id="CP000243">
    <property type="protein sequence ID" value="ABE08338.1"/>
    <property type="molecule type" value="Genomic_DNA"/>
</dbReference>
<dbReference type="RefSeq" id="WP_000734193.1">
    <property type="nucleotide sequence ID" value="NZ_CP064825.1"/>
</dbReference>
<dbReference type="SMR" id="Q1R8H6"/>
<dbReference type="CAZy" id="GH23">
    <property type="family name" value="Glycoside Hydrolase Family 23"/>
</dbReference>
<dbReference type="KEGG" id="eci:UTI89_C2878"/>
<dbReference type="HOGENOM" id="CLU_027494_0_1_6"/>
<dbReference type="Proteomes" id="UP000001952">
    <property type="component" value="Chromosome"/>
</dbReference>
<dbReference type="GO" id="GO:0009279">
    <property type="term" value="C:cell outer membrane"/>
    <property type="evidence" value="ECO:0007669"/>
    <property type="project" value="UniProtKB-SubCell"/>
</dbReference>
<dbReference type="GO" id="GO:0008933">
    <property type="term" value="F:peptidoglycan lytic transglycosylase activity"/>
    <property type="evidence" value="ECO:0007669"/>
    <property type="project" value="UniProtKB-UniRule"/>
</dbReference>
<dbReference type="GO" id="GO:0016998">
    <property type="term" value="P:cell wall macromolecule catabolic process"/>
    <property type="evidence" value="ECO:0007669"/>
    <property type="project" value="UniProtKB-UniRule"/>
</dbReference>
<dbReference type="GO" id="GO:0071555">
    <property type="term" value="P:cell wall organization"/>
    <property type="evidence" value="ECO:0007669"/>
    <property type="project" value="UniProtKB-KW"/>
</dbReference>
<dbReference type="GO" id="GO:0009253">
    <property type="term" value="P:peptidoglycan catabolic process"/>
    <property type="evidence" value="ECO:0007669"/>
    <property type="project" value="TreeGrafter"/>
</dbReference>
<dbReference type="CDD" id="cd13403">
    <property type="entry name" value="MLTF-like"/>
    <property type="match status" value="1"/>
</dbReference>
<dbReference type="CDD" id="cd01009">
    <property type="entry name" value="PBP2_YfhD_N"/>
    <property type="match status" value="1"/>
</dbReference>
<dbReference type="FunFam" id="1.10.530.10:FF:000003">
    <property type="entry name" value="Membrane-bound lytic murein transglycosylase F"/>
    <property type="match status" value="1"/>
</dbReference>
<dbReference type="FunFam" id="3.40.190.10:FF:000051">
    <property type="entry name" value="Membrane-bound lytic murein transglycosylase F"/>
    <property type="match status" value="1"/>
</dbReference>
<dbReference type="Gene3D" id="1.10.530.10">
    <property type="match status" value="1"/>
</dbReference>
<dbReference type="Gene3D" id="3.40.190.10">
    <property type="entry name" value="Periplasmic binding protein-like II"/>
    <property type="match status" value="2"/>
</dbReference>
<dbReference type="HAMAP" id="MF_02016">
    <property type="entry name" value="MltF"/>
    <property type="match status" value="1"/>
</dbReference>
<dbReference type="InterPro" id="IPR023346">
    <property type="entry name" value="Lysozyme-like_dom_sf"/>
</dbReference>
<dbReference type="InterPro" id="IPR023703">
    <property type="entry name" value="MltF"/>
</dbReference>
<dbReference type="InterPro" id="IPR001638">
    <property type="entry name" value="Solute-binding_3/MltF_N"/>
</dbReference>
<dbReference type="InterPro" id="IPR000189">
    <property type="entry name" value="Transglyc_AS"/>
</dbReference>
<dbReference type="InterPro" id="IPR008258">
    <property type="entry name" value="Transglycosylase_SLT_dom_1"/>
</dbReference>
<dbReference type="NCBIfam" id="NF008112">
    <property type="entry name" value="PRK10859.1"/>
    <property type="match status" value="1"/>
</dbReference>
<dbReference type="PANTHER" id="PTHR35936">
    <property type="entry name" value="MEMBRANE-BOUND LYTIC MUREIN TRANSGLYCOSYLASE F"/>
    <property type="match status" value="1"/>
</dbReference>
<dbReference type="PANTHER" id="PTHR35936:SF32">
    <property type="entry name" value="MEMBRANE-BOUND LYTIC MUREIN TRANSGLYCOSYLASE F"/>
    <property type="match status" value="1"/>
</dbReference>
<dbReference type="Pfam" id="PF00497">
    <property type="entry name" value="SBP_bac_3"/>
    <property type="match status" value="1"/>
</dbReference>
<dbReference type="Pfam" id="PF01464">
    <property type="entry name" value="SLT"/>
    <property type="match status" value="1"/>
</dbReference>
<dbReference type="SMART" id="SM00062">
    <property type="entry name" value="PBPb"/>
    <property type="match status" value="1"/>
</dbReference>
<dbReference type="SUPFAM" id="SSF53955">
    <property type="entry name" value="Lysozyme-like"/>
    <property type="match status" value="1"/>
</dbReference>
<dbReference type="SUPFAM" id="SSF53850">
    <property type="entry name" value="Periplasmic binding protein-like II"/>
    <property type="match status" value="1"/>
</dbReference>
<dbReference type="PROSITE" id="PS00922">
    <property type="entry name" value="TRANSGLYCOSYLASE"/>
    <property type="match status" value="1"/>
</dbReference>
<comment type="function">
    <text evidence="1">Murein-degrading enzyme that degrades murein glycan strands and insoluble, high-molecular weight murein sacculi, with the concomitant formation of a 1,6-anhydromuramoyl product. Lytic transglycosylases (LTs) play an integral role in the metabolism of the peptidoglycan (PG) sacculus. Their lytic action creates space within the PG sacculus to allow for its expansion as well as for the insertion of various structures such as secretion systems and flagella.</text>
</comment>
<comment type="catalytic activity">
    <reaction evidence="1">
        <text>Exolytic cleavage of the (1-&gt;4)-beta-glycosidic linkage between N-acetylmuramic acid (MurNAc) and N-acetylglucosamine (GlcNAc) residues in peptidoglycan, from either the reducing or the non-reducing ends of the peptidoglycan chains, with concomitant formation of a 1,6-anhydrobond in the MurNAc residue.</text>
        <dbReference type="EC" id="4.2.2.n1"/>
    </reaction>
</comment>
<comment type="subcellular location">
    <subcellularLocation>
        <location>Cell outer membrane</location>
        <topology>Peripheral membrane protein</topology>
    </subcellularLocation>
    <text evidence="1">Attached to the inner leaflet of the outer membrane.</text>
</comment>
<comment type="domain">
    <text evidence="1">The N-terminal domain does not have lytic activity and probably modulates enzymatic activity. The C-terminal domain is the catalytic active domain.</text>
</comment>
<comment type="similarity">
    <text evidence="1">In the N-terminal section; belongs to the bacterial solute-binding protein 3 family.</text>
</comment>
<comment type="similarity">
    <text evidence="1">In the C-terminal section; belongs to the transglycosylase Slt family.</text>
</comment>